<gene>
    <name type="primary">MT-ND4L</name>
    <name type="synonym">MTND4L</name>
    <name type="synonym">NADH4L</name>
    <name type="synonym">ND4L</name>
</gene>
<protein>
    <recommendedName>
        <fullName>NADH-ubiquinone oxidoreductase chain 4L</fullName>
        <ecNumber>7.1.1.2</ecNumber>
    </recommendedName>
    <alternativeName>
        <fullName>NADH dehydrogenase subunit 4L</fullName>
    </alternativeName>
</protein>
<feature type="chain" id="PRO_0000275059" description="NADH-ubiquinone oxidoreductase chain 4L">
    <location>
        <begin position="1"/>
        <end position="98"/>
    </location>
</feature>
<feature type="transmembrane region" description="Helical" evidence="3">
    <location>
        <begin position="2"/>
        <end position="22"/>
    </location>
</feature>
<feature type="transmembrane region" description="Helical" evidence="3">
    <location>
        <begin position="29"/>
        <end position="49"/>
    </location>
</feature>
<feature type="transmembrane region" description="Helical" evidence="3">
    <location>
        <begin position="61"/>
        <end position="81"/>
    </location>
</feature>
<geneLocation type="mitochondrion"/>
<accession>Q94Q33</accession>
<dbReference type="EC" id="7.1.1.2"/>
<dbReference type="EMBL" id="AF224630">
    <property type="protein sequence ID" value="AAK70573.1"/>
    <property type="molecule type" value="Genomic_DNA"/>
</dbReference>
<dbReference type="EMBL" id="AF224631">
    <property type="protein sequence ID" value="AAK70577.1"/>
    <property type="molecule type" value="Genomic_DNA"/>
</dbReference>
<dbReference type="EMBL" id="AF224632">
    <property type="protein sequence ID" value="AAK70581.1"/>
    <property type="molecule type" value="Genomic_DNA"/>
</dbReference>
<dbReference type="EMBL" id="AF224633">
    <property type="protein sequence ID" value="AAK70585.1"/>
    <property type="molecule type" value="Genomic_DNA"/>
</dbReference>
<dbReference type="EMBL" id="AY582545">
    <property type="protein sequence ID" value="AAT35844.1"/>
    <property type="molecule type" value="Genomic_DNA"/>
</dbReference>
<dbReference type="EMBL" id="AY582632">
    <property type="protein sequence ID" value="AAS92719.1"/>
    <property type="molecule type" value="Genomic_DNA"/>
</dbReference>
<dbReference type="EMBL" id="AY582633">
    <property type="protein sequence ID" value="AAS92723.1"/>
    <property type="molecule type" value="Genomic_DNA"/>
</dbReference>
<dbReference type="EMBL" id="AY582634">
    <property type="protein sequence ID" value="AAS92727.1"/>
    <property type="molecule type" value="Genomic_DNA"/>
</dbReference>
<dbReference type="EMBL" id="AY582635">
    <property type="protein sequence ID" value="AAS92731.1"/>
    <property type="molecule type" value="Genomic_DNA"/>
</dbReference>
<dbReference type="SMR" id="Q94Q33"/>
<dbReference type="GO" id="GO:0005743">
    <property type="term" value="C:mitochondrial inner membrane"/>
    <property type="evidence" value="ECO:0000250"/>
    <property type="project" value="UniProtKB"/>
</dbReference>
<dbReference type="GO" id="GO:0045271">
    <property type="term" value="C:respiratory chain complex I"/>
    <property type="evidence" value="ECO:0000250"/>
    <property type="project" value="UniProtKB"/>
</dbReference>
<dbReference type="GO" id="GO:0008137">
    <property type="term" value="F:NADH dehydrogenase (ubiquinone) activity"/>
    <property type="evidence" value="ECO:0000250"/>
    <property type="project" value="UniProtKB"/>
</dbReference>
<dbReference type="GO" id="GO:0042773">
    <property type="term" value="P:ATP synthesis coupled electron transport"/>
    <property type="evidence" value="ECO:0007669"/>
    <property type="project" value="InterPro"/>
</dbReference>
<dbReference type="FunFam" id="1.10.287.3510:FF:000002">
    <property type="entry name" value="NADH-ubiquinone oxidoreductase chain 4L"/>
    <property type="match status" value="1"/>
</dbReference>
<dbReference type="Gene3D" id="1.10.287.3510">
    <property type="match status" value="1"/>
</dbReference>
<dbReference type="InterPro" id="IPR001133">
    <property type="entry name" value="NADH_UbQ_OxRdtase_chain4L/K"/>
</dbReference>
<dbReference type="InterPro" id="IPR039428">
    <property type="entry name" value="NUOK/Mnh_C1-like"/>
</dbReference>
<dbReference type="PANTHER" id="PTHR11434:SF0">
    <property type="entry name" value="NADH-UBIQUINONE OXIDOREDUCTASE CHAIN 4L"/>
    <property type="match status" value="1"/>
</dbReference>
<dbReference type="PANTHER" id="PTHR11434">
    <property type="entry name" value="NADH-UBIQUINONE OXIDOREDUCTASE SUBUNIT ND4L"/>
    <property type="match status" value="1"/>
</dbReference>
<dbReference type="Pfam" id="PF00420">
    <property type="entry name" value="Oxidored_q2"/>
    <property type="match status" value="1"/>
</dbReference>
<comment type="function">
    <text evidence="1">Core subunit of the mitochondrial membrane respiratory chain NADH dehydrogenase (Complex I) which catalyzes electron transfer from NADH through the respiratory chain, using ubiquinone as an electron acceptor. Part of the enzyme membrane arm which is embedded in the lipid bilayer and involved in proton translocation.</text>
</comment>
<comment type="catalytic activity">
    <reaction evidence="1">
        <text>a ubiquinone + NADH + 5 H(+)(in) = a ubiquinol + NAD(+) + 4 H(+)(out)</text>
        <dbReference type="Rhea" id="RHEA:29091"/>
        <dbReference type="Rhea" id="RHEA-COMP:9565"/>
        <dbReference type="Rhea" id="RHEA-COMP:9566"/>
        <dbReference type="ChEBI" id="CHEBI:15378"/>
        <dbReference type="ChEBI" id="CHEBI:16389"/>
        <dbReference type="ChEBI" id="CHEBI:17976"/>
        <dbReference type="ChEBI" id="CHEBI:57540"/>
        <dbReference type="ChEBI" id="CHEBI:57945"/>
        <dbReference type="EC" id="7.1.1.2"/>
    </reaction>
    <physiologicalReaction direction="left-to-right" evidence="1">
        <dbReference type="Rhea" id="RHEA:29092"/>
    </physiologicalReaction>
</comment>
<comment type="subunit">
    <text evidence="2">Core subunit of respiratory chain NADH dehydrogenase (Complex I) which is composed of 45 different subunits.</text>
</comment>
<comment type="subcellular location">
    <subcellularLocation>
        <location evidence="2">Mitochondrion inner membrane</location>
        <topology evidence="3">Multi-pass membrane protein</topology>
    </subcellularLocation>
</comment>
<comment type="similarity">
    <text evidence="4">Belongs to the complex I subunit 4L family.</text>
</comment>
<proteinExistence type="inferred from homology"/>
<reference key="1">
    <citation type="journal article" date="2003" name="Proc. Natl. Acad. Sci. U.S.A.">
        <title>A molecular approach to comparative phylogeography of extant Malagasy lemurs.</title>
        <authorList>
            <person name="Pastorini J."/>
            <person name="Thalmann U."/>
            <person name="Martin R.D."/>
        </authorList>
    </citation>
    <scope>NUCLEOTIDE SEQUENCE [GENOMIC DNA]</scope>
</reference>
<reference key="2">
    <citation type="journal article" date="2006" name="Int. J. Primatol.">
        <title>Revision of the mouse lemurs (Microcebus) of Eastern Madagascar.</title>
        <authorList>
            <person name="Louis E.E. Jr."/>
            <person name="Coles M.S."/>
            <person name="Andriantompohavana R."/>
            <person name="Sommer J.A."/>
            <person name="Engberg S.E."/>
            <person name="Zaonarivelo J.R."/>
            <person name="Mayor M.I."/>
            <person name="Brenneman R.A."/>
        </authorList>
    </citation>
    <scope>NUCLEOTIDE SEQUENCE [GENOMIC DNA]</scope>
    <source>
        <strain>Isolate ANK18</strain>
        <strain>Isolate ANK24</strain>
        <strain>Isolate ANK25</strain>
        <strain>Isolate ANK7</strain>
        <strain>Isolate ANK9</strain>
    </source>
</reference>
<sequence>MLSISININLAFAAALLGMLMFRSHMMSSLLCLEGMMLSMFILSTLIILNMQFTMSFTMPILLLVFAACEAAIGLALLVMVSNNYGLDYIQNLNLLQC</sequence>
<organism>
    <name type="scientific">Microcebus ravelobensis</name>
    <name type="common">Golden-brown mouse lemur</name>
    <dbReference type="NCBI Taxonomy" id="122231"/>
    <lineage>
        <taxon>Eukaryota</taxon>
        <taxon>Metazoa</taxon>
        <taxon>Chordata</taxon>
        <taxon>Craniata</taxon>
        <taxon>Vertebrata</taxon>
        <taxon>Euteleostomi</taxon>
        <taxon>Mammalia</taxon>
        <taxon>Eutheria</taxon>
        <taxon>Euarchontoglires</taxon>
        <taxon>Primates</taxon>
        <taxon>Strepsirrhini</taxon>
        <taxon>Lemuriformes</taxon>
        <taxon>Cheirogaleidae</taxon>
        <taxon>Microcebus</taxon>
    </lineage>
</organism>
<keyword id="KW-0249">Electron transport</keyword>
<keyword id="KW-0472">Membrane</keyword>
<keyword id="KW-0496">Mitochondrion</keyword>
<keyword id="KW-0999">Mitochondrion inner membrane</keyword>
<keyword id="KW-0520">NAD</keyword>
<keyword id="KW-0679">Respiratory chain</keyword>
<keyword id="KW-1278">Translocase</keyword>
<keyword id="KW-0812">Transmembrane</keyword>
<keyword id="KW-1133">Transmembrane helix</keyword>
<keyword id="KW-0813">Transport</keyword>
<keyword id="KW-0830">Ubiquinone</keyword>
<name>NU4LM_MICRA</name>
<evidence type="ECO:0000250" key="1">
    <source>
        <dbReference type="UniProtKB" id="P03901"/>
    </source>
</evidence>
<evidence type="ECO:0000250" key="2">
    <source>
        <dbReference type="UniProtKB" id="P03902"/>
    </source>
</evidence>
<evidence type="ECO:0000255" key="3"/>
<evidence type="ECO:0000305" key="4"/>